<dbReference type="EC" id="2.5.1.78" evidence="1"/>
<dbReference type="EMBL" id="AM260522">
    <property type="protein sequence ID" value="CAJ99101.1"/>
    <property type="molecule type" value="Genomic_DNA"/>
</dbReference>
<dbReference type="RefSeq" id="WP_011577216.1">
    <property type="nucleotide sequence ID" value="NC_008229.1"/>
</dbReference>
<dbReference type="SMR" id="Q17Z25"/>
<dbReference type="STRING" id="382638.Hac_0255"/>
<dbReference type="GeneID" id="31757768"/>
<dbReference type="KEGG" id="hac:Hac_0255"/>
<dbReference type="eggNOG" id="COG0054">
    <property type="taxonomic scope" value="Bacteria"/>
</dbReference>
<dbReference type="HOGENOM" id="CLU_089358_1_1_7"/>
<dbReference type="OrthoDB" id="9809709at2"/>
<dbReference type="BioCyc" id="HACI382638:HAC_RS01110-MONOMER"/>
<dbReference type="UniPathway" id="UPA00275">
    <property type="reaction ID" value="UER00404"/>
</dbReference>
<dbReference type="Proteomes" id="UP000000775">
    <property type="component" value="Chromosome"/>
</dbReference>
<dbReference type="GO" id="GO:0005829">
    <property type="term" value="C:cytosol"/>
    <property type="evidence" value="ECO:0007669"/>
    <property type="project" value="TreeGrafter"/>
</dbReference>
<dbReference type="GO" id="GO:0009349">
    <property type="term" value="C:riboflavin synthase complex"/>
    <property type="evidence" value="ECO:0007669"/>
    <property type="project" value="InterPro"/>
</dbReference>
<dbReference type="GO" id="GO:0000906">
    <property type="term" value="F:6,7-dimethyl-8-ribityllumazine synthase activity"/>
    <property type="evidence" value="ECO:0007669"/>
    <property type="project" value="UniProtKB-UniRule"/>
</dbReference>
<dbReference type="GO" id="GO:0009231">
    <property type="term" value="P:riboflavin biosynthetic process"/>
    <property type="evidence" value="ECO:0007669"/>
    <property type="project" value="UniProtKB-UniRule"/>
</dbReference>
<dbReference type="CDD" id="cd09209">
    <property type="entry name" value="Lumazine_synthase-I"/>
    <property type="match status" value="1"/>
</dbReference>
<dbReference type="FunFam" id="3.40.50.960:FF:000001">
    <property type="entry name" value="6,7-dimethyl-8-ribityllumazine synthase"/>
    <property type="match status" value="1"/>
</dbReference>
<dbReference type="Gene3D" id="3.40.50.960">
    <property type="entry name" value="Lumazine/riboflavin synthase"/>
    <property type="match status" value="1"/>
</dbReference>
<dbReference type="HAMAP" id="MF_00178">
    <property type="entry name" value="Lumazine_synth"/>
    <property type="match status" value="1"/>
</dbReference>
<dbReference type="InterPro" id="IPR034964">
    <property type="entry name" value="LS"/>
</dbReference>
<dbReference type="InterPro" id="IPR002180">
    <property type="entry name" value="LS/RS"/>
</dbReference>
<dbReference type="InterPro" id="IPR036467">
    <property type="entry name" value="LS/RS_sf"/>
</dbReference>
<dbReference type="NCBIfam" id="TIGR00114">
    <property type="entry name" value="lumazine-synth"/>
    <property type="match status" value="1"/>
</dbReference>
<dbReference type="PANTHER" id="PTHR21058:SF0">
    <property type="entry name" value="6,7-DIMETHYL-8-RIBITYLLUMAZINE SYNTHASE"/>
    <property type="match status" value="1"/>
</dbReference>
<dbReference type="PANTHER" id="PTHR21058">
    <property type="entry name" value="6,7-DIMETHYL-8-RIBITYLLUMAZINE SYNTHASE DMRL SYNTHASE LUMAZINE SYNTHASE"/>
    <property type="match status" value="1"/>
</dbReference>
<dbReference type="Pfam" id="PF00885">
    <property type="entry name" value="DMRL_synthase"/>
    <property type="match status" value="1"/>
</dbReference>
<dbReference type="SUPFAM" id="SSF52121">
    <property type="entry name" value="Lumazine synthase"/>
    <property type="match status" value="1"/>
</dbReference>
<name>RISB_HELAH</name>
<accession>Q17Z25</accession>
<proteinExistence type="inferred from homology"/>
<protein>
    <recommendedName>
        <fullName evidence="1">6,7-dimethyl-8-ribityllumazine synthase</fullName>
        <shortName evidence="1">DMRL synthase</shortName>
        <shortName evidence="1">LS</shortName>
        <shortName evidence="1">Lumazine synthase</shortName>
        <ecNumber evidence="1">2.5.1.78</ecNumber>
    </recommendedName>
</protein>
<reference key="1">
    <citation type="journal article" date="2006" name="PLoS Genet.">
        <title>Who ate whom? Adaptive Helicobacter genomic changes that accompanied a host jump from early humans to large felines.</title>
        <authorList>
            <person name="Eppinger M."/>
            <person name="Baar C."/>
            <person name="Linz B."/>
            <person name="Raddatz G."/>
            <person name="Lanz C."/>
            <person name="Keller H."/>
            <person name="Morelli G."/>
            <person name="Gressmann H."/>
            <person name="Achtman M."/>
            <person name="Schuster S.C."/>
        </authorList>
    </citation>
    <scope>NUCLEOTIDE SEQUENCE [LARGE SCALE GENOMIC DNA]</scope>
    <source>
        <strain>Sheeba</strain>
    </source>
</reference>
<evidence type="ECO:0000255" key="1">
    <source>
        <dbReference type="HAMAP-Rule" id="MF_00178"/>
    </source>
</evidence>
<feature type="chain" id="PRO_1000040432" description="6,7-dimethyl-8-ribityllumazine synthase">
    <location>
        <begin position="1"/>
        <end position="156"/>
    </location>
</feature>
<feature type="active site" description="Proton donor" evidence="1">
    <location>
        <position position="89"/>
    </location>
</feature>
<feature type="binding site" evidence="1">
    <location>
        <position position="23"/>
    </location>
    <ligand>
        <name>5-amino-6-(D-ribitylamino)uracil</name>
        <dbReference type="ChEBI" id="CHEBI:15934"/>
    </ligand>
</feature>
<feature type="binding site" evidence="1">
    <location>
        <begin position="57"/>
        <end position="59"/>
    </location>
    <ligand>
        <name>5-amino-6-(D-ribitylamino)uracil</name>
        <dbReference type="ChEBI" id="CHEBI:15934"/>
    </ligand>
</feature>
<feature type="binding site" evidence="1">
    <location>
        <begin position="81"/>
        <end position="83"/>
    </location>
    <ligand>
        <name>5-amino-6-(D-ribitylamino)uracil</name>
        <dbReference type="ChEBI" id="CHEBI:15934"/>
    </ligand>
</feature>
<feature type="binding site" evidence="1">
    <location>
        <begin position="86"/>
        <end position="87"/>
    </location>
    <ligand>
        <name>(2S)-2-hydroxy-3-oxobutyl phosphate</name>
        <dbReference type="ChEBI" id="CHEBI:58830"/>
    </ligand>
</feature>
<feature type="binding site" evidence="1">
    <location>
        <position position="114"/>
    </location>
    <ligand>
        <name>5-amino-6-(D-ribitylamino)uracil</name>
        <dbReference type="ChEBI" id="CHEBI:15934"/>
    </ligand>
</feature>
<feature type="binding site" evidence="1">
    <location>
        <position position="128"/>
    </location>
    <ligand>
        <name>(2S)-2-hydroxy-3-oxobutyl phosphate</name>
        <dbReference type="ChEBI" id="CHEBI:58830"/>
    </ligand>
</feature>
<organism>
    <name type="scientific">Helicobacter acinonychis (strain Sheeba)</name>
    <dbReference type="NCBI Taxonomy" id="382638"/>
    <lineage>
        <taxon>Bacteria</taxon>
        <taxon>Pseudomonadati</taxon>
        <taxon>Campylobacterota</taxon>
        <taxon>Epsilonproteobacteria</taxon>
        <taxon>Campylobacterales</taxon>
        <taxon>Helicobacteraceae</taxon>
        <taxon>Helicobacter</taxon>
    </lineage>
</organism>
<gene>
    <name evidence="1" type="primary">ribH</name>
    <name type="ordered locus">Hac_0255</name>
</gene>
<sequence>MQLIEGKLQLQGNERIAIVISRFNHIITDRLQEGAIDCFKRHGGNEKLLNLVLVPGAYELPLILDKLLESKKYDGVCVLGAIIRGGTPHFDYVSAEATKGIANTMLKYSMPVSFGVLTTDNIEQAIERAGSKAGNRGFEAMSTLIELLSLCQTLKG</sequence>
<comment type="function">
    <text evidence="1">Catalyzes the formation of 6,7-dimethyl-8-ribityllumazine by condensation of 5-amino-6-(D-ribitylamino)uracil with 3,4-dihydroxy-2-butanone 4-phosphate. This is the penultimate step in the biosynthesis of riboflavin.</text>
</comment>
<comment type="catalytic activity">
    <reaction evidence="1">
        <text>(2S)-2-hydroxy-3-oxobutyl phosphate + 5-amino-6-(D-ribitylamino)uracil = 6,7-dimethyl-8-(1-D-ribityl)lumazine + phosphate + 2 H2O + H(+)</text>
        <dbReference type="Rhea" id="RHEA:26152"/>
        <dbReference type="ChEBI" id="CHEBI:15377"/>
        <dbReference type="ChEBI" id="CHEBI:15378"/>
        <dbReference type="ChEBI" id="CHEBI:15934"/>
        <dbReference type="ChEBI" id="CHEBI:43474"/>
        <dbReference type="ChEBI" id="CHEBI:58201"/>
        <dbReference type="ChEBI" id="CHEBI:58830"/>
        <dbReference type="EC" id="2.5.1.78"/>
    </reaction>
</comment>
<comment type="pathway">
    <text evidence="1">Cofactor biosynthesis; riboflavin biosynthesis; riboflavin from 2-hydroxy-3-oxobutyl phosphate and 5-amino-6-(D-ribitylamino)uracil: step 1/2.</text>
</comment>
<comment type="similarity">
    <text evidence="1">Belongs to the DMRL synthase family.</text>
</comment>
<keyword id="KW-0686">Riboflavin biosynthesis</keyword>
<keyword id="KW-0808">Transferase</keyword>